<keyword id="KW-0963">Cytoplasm</keyword>
<keyword id="KW-0444">Lipid biosynthesis</keyword>
<keyword id="KW-0443">Lipid metabolism</keyword>
<keyword id="KW-0520">NAD</keyword>
<keyword id="KW-0521">NADP</keyword>
<keyword id="KW-0547">Nucleotide-binding</keyword>
<keyword id="KW-0560">Oxidoreductase</keyword>
<keyword id="KW-0594">Phospholipid biosynthesis</keyword>
<keyword id="KW-1208">Phospholipid metabolism</keyword>
<keyword id="KW-1185">Reference proteome</keyword>
<comment type="function">
    <text evidence="1">Catalyzes the reduction of the glycolytic intermediate dihydroxyacetone phosphate (DHAP) to sn-glycerol 3-phosphate (G3P), the key precursor for phospholipid synthesis.</text>
</comment>
<comment type="catalytic activity">
    <reaction evidence="1">
        <text>sn-glycerol 3-phosphate + NAD(+) = dihydroxyacetone phosphate + NADH + H(+)</text>
        <dbReference type="Rhea" id="RHEA:11092"/>
        <dbReference type="ChEBI" id="CHEBI:15378"/>
        <dbReference type="ChEBI" id="CHEBI:57540"/>
        <dbReference type="ChEBI" id="CHEBI:57597"/>
        <dbReference type="ChEBI" id="CHEBI:57642"/>
        <dbReference type="ChEBI" id="CHEBI:57945"/>
        <dbReference type="EC" id="1.1.1.94"/>
    </reaction>
    <physiologicalReaction direction="right-to-left" evidence="1">
        <dbReference type="Rhea" id="RHEA:11094"/>
    </physiologicalReaction>
</comment>
<comment type="catalytic activity">
    <reaction evidence="1">
        <text>sn-glycerol 3-phosphate + NADP(+) = dihydroxyacetone phosphate + NADPH + H(+)</text>
        <dbReference type="Rhea" id="RHEA:11096"/>
        <dbReference type="ChEBI" id="CHEBI:15378"/>
        <dbReference type="ChEBI" id="CHEBI:57597"/>
        <dbReference type="ChEBI" id="CHEBI:57642"/>
        <dbReference type="ChEBI" id="CHEBI:57783"/>
        <dbReference type="ChEBI" id="CHEBI:58349"/>
        <dbReference type="EC" id="1.1.1.94"/>
    </reaction>
    <physiologicalReaction direction="right-to-left" evidence="1">
        <dbReference type="Rhea" id="RHEA:11098"/>
    </physiologicalReaction>
</comment>
<comment type="pathway">
    <text evidence="1">Membrane lipid metabolism; glycerophospholipid metabolism.</text>
</comment>
<comment type="subcellular location">
    <subcellularLocation>
        <location evidence="1">Cytoplasm</location>
    </subcellularLocation>
</comment>
<comment type="similarity">
    <text evidence="1">Belongs to the NAD-dependent glycerol-3-phosphate dehydrogenase family.</text>
</comment>
<comment type="sequence caution" evidence="2">
    <conflict type="erroneous initiation">
        <sequence resource="EMBL-CDS" id="AAW77452"/>
    </conflict>
</comment>
<accession>Q5GV21</accession>
<name>GPDA_XANOR</name>
<evidence type="ECO:0000255" key="1">
    <source>
        <dbReference type="HAMAP-Rule" id="MF_00394"/>
    </source>
</evidence>
<evidence type="ECO:0000305" key="2"/>
<organism>
    <name type="scientific">Xanthomonas oryzae pv. oryzae (strain KACC10331 / KXO85)</name>
    <dbReference type="NCBI Taxonomy" id="291331"/>
    <lineage>
        <taxon>Bacteria</taxon>
        <taxon>Pseudomonadati</taxon>
        <taxon>Pseudomonadota</taxon>
        <taxon>Gammaproteobacteria</taxon>
        <taxon>Lysobacterales</taxon>
        <taxon>Lysobacteraceae</taxon>
        <taxon>Xanthomonas</taxon>
    </lineage>
</organism>
<proteinExistence type="inferred from homology"/>
<dbReference type="EC" id="1.1.1.94" evidence="1"/>
<dbReference type="EMBL" id="AE013598">
    <property type="protein sequence ID" value="AAW77452.1"/>
    <property type="status" value="ALT_INIT"/>
    <property type="molecule type" value="Genomic_DNA"/>
</dbReference>
<dbReference type="SMR" id="Q5GV21"/>
<dbReference type="STRING" id="291331.XOO4198"/>
<dbReference type="KEGG" id="xoo:XOO4198"/>
<dbReference type="PATRIC" id="fig|291331.8.peg.4660"/>
<dbReference type="HOGENOM" id="CLU_033449_0_2_6"/>
<dbReference type="UniPathway" id="UPA00940"/>
<dbReference type="Proteomes" id="UP000006735">
    <property type="component" value="Chromosome"/>
</dbReference>
<dbReference type="GO" id="GO:0005829">
    <property type="term" value="C:cytosol"/>
    <property type="evidence" value="ECO:0007669"/>
    <property type="project" value="TreeGrafter"/>
</dbReference>
<dbReference type="GO" id="GO:0047952">
    <property type="term" value="F:glycerol-3-phosphate dehydrogenase [NAD(P)+] activity"/>
    <property type="evidence" value="ECO:0007669"/>
    <property type="project" value="UniProtKB-UniRule"/>
</dbReference>
<dbReference type="GO" id="GO:0051287">
    <property type="term" value="F:NAD binding"/>
    <property type="evidence" value="ECO:0007669"/>
    <property type="project" value="InterPro"/>
</dbReference>
<dbReference type="GO" id="GO:0005975">
    <property type="term" value="P:carbohydrate metabolic process"/>
    <property type="evidence" value="ECO:0007669"/>
    <property type="project" value="InterPro"/>
</dbReference>
<dbReference type="GO" id="GO:0046167">
    <property type="term" value="P:glycerol-3-phosphate biosynthetic process"/>
    <property type="evidence" value="ECO:0007669"/>
    <property type="project" value="UniProtKB-UniRule"/>
</dbReference>
<dbReference type="GO" id="GO:0046168">
    <property type="term" value="P:glycerol-3-phosphate catabolic process"/>
    <property type="evidence" value="ECO:0007669"/>
    <property type="project" value="InterPro"/>
</dbReference>
<dbReference type="GO" id="GO:0046474">
    <property type="term" value="P:glycerophospholipid biosynthetic process"/>
    <property type="evidence" value="ECO:0007669"/>
    <property type="project" value="TreeGrafter"/>
</dbReference>
<dbReference type="FunFam" id="1.10.1040.10:FF:000001">
    <property type="entry name" value="Glycerol-3-phosphate dehydrogenase [NAD(P)+]"/>
    <property type="match status" value="1"/>
</dbReference>
<dbReference type="FunFam" id="3.40.50.720:FF:000019">
    <property type="entry name" value="Glycerol-3-phosphate dehydrogenase [NAD(P)+]"/>
    <property type="match status" value="1"/>
</dbReference>
<dbReference type="Gene3D" id="1.10.1040.10">
    <property type="entry name" value="N-(1-d-carboxylethyl)-l-norvaline Dehydrogenase, domain 2"/>
    <property type="match status" value="1"/>
</dbReference>
<dbReference type="Gene3D" id="3.40.50.720">
    <property type="entry name" value="NAD(P)-binding Rossmann-like Domain"/>
    <property type="match status" value="1"/>
</dbReference>
<dbReference type="HAMAP" id="MF_00394">
    <property type="entry name" value="NAD_Glyc3P_dehydrog"/>
    <property type="match status" value="1"/>
</dbReference>
<dbReference type="InterPro" id="IPR008927">
    <property type="entry name" value="6-PGluconate_DH-like_C_sf"/>
</dbReference>
<dbReference type="InterPro" id="IPR013328">
    <property type="entry name" value="6PGD_dom2"/>
</dbReference>
<dbReference type="InterPro" id="IPR006168">
    <property type="entry name" value="G3P_DH_NAD-dep"/>
</dbReference>
<dbReference type="InterPro" id="IPR006109">
    <property type="entry name" value="G3P_DH_NAD-dep_C"/>
</dbReference>
<dbReference type="InterPro" id="IPR011128">
    <property type="entry name" value="G3P_DH_NAD-dep_N"/>
</dbReference>
<dbReference type="InterPro" id="IPR036291">
    <property type="entry name" value="NAD(P)-bd_dom_sf"/>
</dbReference>
<dbReference type="NCBIfam" id="NF000940">
    <property type="entry name" value="PRK00094.1-2"/>
    <property type="match status" value="1"/>
</dbReference>
<dbReference type="NCBIfam" id="NF000942">
    <property type="entry name" value="PRK00094.1-4"/>
    <property type="match status" value="1"/>
</dbReference>
<dbReference type="PANTHER" id="PTHR11728">
    <property type="entry name" value="GLYCEROL-3-PHOSPHATE DEHYDROGENASE"/>
    <property type="match status" value="1"/>
</dbReference>
<dbReference type="PANTHER" id="PTHR11728:SF1">
    <property type="entry name" value="GLYCEROL-3-PHOSPHATE DEHYDROGENASE [NAD(+)] 2, CHLOROPLASTIC"/>
    <property type="match status" value="1"/>
</dbReference>
<dbReference type="Pfam" id="PF07479">
    <property type="entry name" value="NAD_Gly3P_dh_C"/>
    <property type="match status" value="1"/>
</dbReference>
<dbReference type="Pfam" id="PF01210">
    <property type="entry name" value="NAD_Gly3P_dh_N"/>
    <property type="match status" value="1"/>
</dbReference>
<dbReference type="PIRSF" id="PIRSF000114">
    <property type="entry name" value="Glycerol-3-P_dh"/>
    <property type="match status" value="1"/>
</dbReference>
<dbReference type="PRINTS" id="PR00077">
    <property type="entry name" value="GPDHDRGNASE"/>
</dbReference>
<dbReference type="SUPFAM" id="SSF48179">
    <property type="entry name" value="6-phosphogluconate dehydrogenase C-terminal domain-like"/>
    <property type="match status" value="1"/>
</dbReference>
<dbReference type="SUPFAM" id="SSF51735">
    <property type="entry name" value="NAD(P)-binding Rossmann-fold domains"/>
    <property type="match status" value="1"/>
</dbReference>
<dbReference type="PROSITE" id="PS00957">
    <property type="entry name" value="NAD_G3PDH"/>
    <property type="match status" value="1"/>
</dbReference>
<gene>
    <name evidence="1" type="primary">gpsA</name>
    <name type="ordered locus">XOO4198</name>
</gene>
<feature type="chain" id="PRO_0000255398" description="Glycerol-3-phosphate dehydrogenase [NAD(P)+]">
    <location>
        <begin position="1"/>
        <end position="341"/>
    </location>
</feature>
<feature type="active site" description="Proton acceptor" evidence="1">
    <location>
        <position position="194"/>
    </location>
</feature>
<feature type="binding site" evidence="1">
    <location>
        <position position="15"/>
    </location>
    <ligand>
        <name>NADPH</name>
        <dbReference type="ChEBI" id="CHEBI:57783"/>
    </ligand>
</feature>
<feature type="binding site" evidence="1">
    <location>
        <position position="16"/>
    </location>
    <ligand>
        <name>NADPH</name>
        <dbReference type="ChEBI" id="CHEBI:57783"/>
    </ligand>
</feature>
<feature type="binding site" evidence="1">
    <location>
        <position position="36"/>
    </location>
    <ligand>
        <name>NADPH</name>
        <dbReference type="ChEBI" id="CHEBI:57783"/>
    </ligand>
</feature>
<feature type="binding site" evidence="1">
    <location>
        <position position="110"/>
    </location>
    <ligand>
        <name>NADPH</name>
        <dbReference type="ChEBI" id="CHEBI:57783"/>
    </ligand>
</feature>
<feature type="binding site" evidence="1">
    <location>
        <position position="110"/>
    </location>
    <ligand>
        <name>sn-glycerol 3-phosphate</name>
        <dbReference type="ChEBI" id="CHEBI:57597"/>
    </ligand>
</feature>
<feature type="binding site" evidence="1">
    <location>
        <position position="139"/>
    </location>
    <ligand>
        <name>sn-glycerol 3-phosphate</name>
        <dbReference type="ChEBI" id="CHEBI:57597"/>
    </ligand>
</feature>
<feature type="binding site" evidence="1">
    <location>
        <position position="141"/>
    </location>
    <ligand>
        <name>sn-glycerol 3-phosphate</name>
        <dbReference type="ChEBI" id="CHEBI:57597"/>
    </ligand>
</feature>
<feature type="binding site" evidence="1">
    <location>
        <position position="143"/>
    </location>
    <ligand>
        <name>NADPH</name>
        <dbReference type="ChEBI" id="CHEBI:57783"/>
    </ligand>
</feature>
<feature type="binding site" evidence="1">
    <location>
        <position position="194"/>
    </location>
    <ligand>
        <name>sn-glycerol 3-phosphate</name>
        <dbReference type="ChEBI" id="CHEBI:57597"/>
    </ligand>
</feature>
<feature type="binding site" evidence="1">
    <location>
        <position position="247"/>
    </location>
    <ligand>
        <name>sn-glycerol 3-phosphate</name>
        <dbReference type="ChEBI" id="CHEBI:57597"/>
    </ligand>
</feature>
<feature type="binding site" evidence="1">
    <location>
        <position position="257"/>
    </location>
    <ligand>
        <name>sn-glycerol 3-phosphate</name>
        <dbReference type="ChEBI" id="CHEBI:57597"/>
    </ligand>
</feature>
<feature type="binding site" evidence="1">
    <location>
        <position position="258"/>
    </location>
    <ligand>
        <name>NADPH</name>
        <dbReference type="ChEBI" id="CHEBI:57783"/>
    </ligand>
</feature>
<feature type="binding site" evidence="1">
    <location>
        <position position="258"/>
    </location>
    <ligand>
        <name>sn-glycerol 3-phosphate</name>
        <dbReference type="ChEBI" id="CHEBI:57597"/>
    </ligand>
</feature>
<feature type="binding site" evidence="1">
    <location>
        <position position="259"/>
    </location>
    <ligand>
        <name>sn-glycerol 3-phosphate</name>
        <dbReference type="ChEBI" id="CHEBI:57597"/>
    </ligand>
</feature>
<feature type="binding site" evidence="1">
    <location>
        <position position="282"/>
    </location>
    <ligand>
        <name>NADPH</name>
        <dbReference type="ChEBI" id="CHEBI:57783"/>
    </ligand>
</feature>
<feature type="binding site" evidence="1">
    <location>
        <position position="284"/>
    </location>
    <ligand>
        <name>NADPH</name>
        <dbReference type="ChEBI" id="CHEBI:57783"/>
    </ligand>
</feature>
<reference key="1">
    <citation type="journal article" date="2005" name="Nucleic Acids Res.">
        <title>The genome sequence of Xanthomonas oryzae pathovar oryzae KACC10331, the bacterial blight pathogen of rice.</title>
        <authorList>
            <person name="Lee B.-M."/>
            <person name="Park Y.-J."/>
            <person name="Park D.-S."/>
            <person name="Kang H.-W."/>
            <person name="Kim J.-G."/>
            <person name="Song E.-S."/>
            <person name="Park I.-C."/>
            <person name="Yoon U.-H."/>
            <person name="Hahn J.-H."/>
            <person name="Koo B.-S."/>
            <person name="Lee G.-B."/>
            <person name="Kim H."/>
            <person name="Park H.-S."/>
            <person name="Yoon K.-O."/>
            <person name="Kim J.-H."/>
            <person name="Jung C.-H."/>
            <person name="Koh N.-H."/>
            <person name="Seo J.-S."/>
            <person name="Go S.-J."/>
        </authorList>
    </citation>
    <scope>NUCLEOTIDE SEQUENCE [LARGE SCALE GENOMIC DNA]</scope>
    <source>
        <strain>KACC10331 / KXO85</strain>
    </source>
</reference>
<protein>
    <recommendedName>
        <fullName evidence="1">Glycerol-3-phosphate dehydrogenase [NAD(P)+]</fullName>
        <ecNumber evidence="1">1.1.1.94</ecNumber>
    </recommendedName>
    <alternativeName>
        <fullName evidence="1">NAD(P)(+)-dependent glycerol-3-phosphate dehydrogenase</fullName>
    </alternativeName>
    <alternativeName>
        <fullName evidence="1">NAD(P)H-dependent dihydroxyacetone-phosphate reductase</fullName>
    </alternativeName>
</protein>
<sequence length="341" mass="35803">MSDSTHKIAVIGAGSWGTALAALLARHGHPTVLWGRDAAMVDTIDRTHENARYLPGIALPDSLRATTDLQAAVADAAWILVVVPSHAFTETIRLIAPLRPACPGVAWATKGFEPGSGRFLHEVARDILGPSVPLAVVTGPSFAKEVTLGLPTAITVHGDDATFAQAVADAMHGPTFRAYTGDDMVGAELGGAMKNVLAVATGVADGMQLGLNARAGLITRGLNEMLRLAAAIGARPETLMGLAGLGDLVLTCTGDLSRNRRLGLALGRGQSLNDAIRQIGQVVESVQMADEVMRQAEHHGIELPISNAVRAVLHGEITPEAGLKELLARERKPEYPQTLFT</sequence>